<dbReference type="EMBL" id="EU016709">
    <property type="protein sequence ID" value="ABU85151.1"/>
    <property type="molecule type" value="Genomic_DNA"/>
</dbReference>
<dbReference type="EMBL" id="EU273602">
    <property type="protein sequence ID" value="ABX38778.1"/>
    <property type="molecule type" value="Genomic_DNA"/>
</dbReference>
<dbReference type="RefSeq" id="YP_001586216.1">
    <property type="nucleotide sequence ID" value="NC_010093.1"/>
</dbReference>
<dbReference type="SMR" id="A9LYD5"/>
<dbReference type="GeneID" id="5777768"/>
<dbReference type="GO" id="GO:0009507">
    <property type="term" value="C:chloroplast"/>
    <property type="evidence" value="ECO:0007669"/>
    <property type="project" value="UniProtKB-SubCell"/>
</dbReference>
<dbReference type="GO" id="GO:0005829">
    <property type="term" value="C:cytosol"/>
    <property type="evidence" value="ECO:0007669"/>
    <property type="project" value="TreeGrafter"/>
</dbReference>
<dbReference type="GO" id="GO:0043022">
    <property type="term" value="F:ribosome binding"/>
    <property type="evidence" value="ECO:0007669"/>
    <property type="project" value="UniProtKB-UniRule"/>
</dbReference>
<dbReference type="GO" id="GO:0019843">
    <property type="term" value="F:rRNA binding"/>
    <property type="evidence" value="ECO:0007669"/>
    <property type="project" value="UniProtKB-UniRule"/>
</dbReference>
<dbReference type="GO" id="GO:0003743">
    <property type="term" value="F:translation initiation factor activity"/>
    <property type="evidence" value="ECO:0007669"/>
    <property type="project" value="UniProtKB-UniRule"/>
</dbReference>
<dbReference type="CDD" id="cd04451">
    <property type="entry name" value="S1_IF1"/>
    <property type="match status" value="1"/>
</dbReference>
<dbReference type="FunFam" id="2.40.50.140:FF:000019">
    <property type="entry name" value="Translation initiation factor IF-1, chloroplastic"/>
    <property type="match status" value="1"/>
</dbReference>
<dbReference type="Gene3D" id="2.40.50.140">
    <property type="entry name" value="Nucleic acid-binding proteins"/>
    <property type="match status" value="1"/>
</dbReference>
<dbReference type="HAMAP" id="MF_00075">
    <property type="entry name" value="IF_1"/>
    <property type="match status" value="1"/>
</dbReference>
<dbReference type="InterPro" id="IPR012340">
    <property type="entry name" value="NA-bd_OB-fold"/>
</dbReference>
<dbReference type="InterPro" id="IPR006196">
    <property type="entry name" value="RNA-binding_domain_S1_IF1"/>
</dbReference>
<dbReference type="InterPro" id="IPR003029">
    <property type="entry name" value="S1_domain"/>
</dbReference>
<dbReference type="InterPro" id="IPR004368">
    <property type="entry name" value="TIF_IF1"/>
</dbReference>
<dbReference type="NCBIfam" id="TIGR00008">
    <property type="entry name" value="infA"/>
    <property type="match status" value="1"/>
</dbReference>
<dbReference type="PANTHER" id="PTHR33370">
    <property type="entry name" value="TRANSLATION INITIATION FACTOR IF-1, CHLOROPLASTIC"/>
    <property type="match status" value="1"/>
</dbReference>
<dbReference type="PANTHER" id="PTHR33370:SF1">
    <property type="entry name" value="TRANSLATION INITIATION FACTOR IF-1, CHLOROPLASTIC"/>
    <property type="match status" value="1"/>
</dbReference>
<dbReference type="Pfam" id="PF01176">
    <property type="entry name" value="eIF-1a"/>
    <property type="match status" value="1"/>
</dbReference>
<dbReference type="SMART" id="SM00316">
    <property type="entry name" value="S1"/>
    <property type="match status" value="1"/>
</dbReference>
<dbReference type="SUPFAM" id="SSF50249">
    <property type="entry name" value="Nucleic acid-binding proteins"/>
    <property type="match status" value="1"/>
</dbReference>
<dbReference type="PROSITE" id="PS50832">
    <property type="entry name" value="S1_IF1_TYPE"/>
    <property type="match status" value="1"/>
</dbReference>
<gene>
    <name evidence="1" type="primary">infA</name>
</gene>
<reference key="1">
    <citation type="journal article" date="2007" name="Proc. Natl. Acad. Sci. U.S.A.">
        <title>Analysis of 81 genes from 64 plastid genomes resolves relationships in angiosperms and identifies genome-scale evolutionary patterns.</title>
        <authorList>
            <person name="Jansen R.K."/>
            <person name="Cai Z."/>
            <person name="Raubeson L.A."/>
            <person name="Daniell H."/>
            <person name="dePamphilis C.W."/>
            <person name="Leebens-Mack J."/>
            <person name="Muller K.F."/>
            <person name="Guisinger-Bellian M."/>
            <person name="Haberle R.C."/>
            <person name="Hansen A.K."/>
            <person name="Chumley T.W."/>
            <person name="Lee S.B."/>
            <person name="Peery R."/>
            <person name="McNeal J.R."/>
            <person name="Kuehl J.V."/>
            <person name="Boore J.L."/>
        </authorList>
    </citation>
    <scope>NUCLEOTIDE SEQUENCE [GENOMIC DNA]</scope>
</reference>
<reference key="2">
    <citation type="submission" date="2007-11" db="EMBL/GenBank/DDBJ databases">
        <title>The complete chloroplast genome of Acorus americanus.</title>
        <authorList>
            <person name="Peery R.M."/>
            <person name="Chumley T.W."/>
            <person name="Kuehl J.V."/>
            <person name="Boore J.L."/>
            <person name="Raubeson L.A."/>
        </authorList>
    </citation>
    <scope>NUCLEOTIDE SEQUENCE [LARGE SCALE GENOMIC DNA]</scope>
</reference>
<geneLocation type="chloroplast"/>
<organism>
    <name type="scientific">Acorus calamus var. americanus</name>
    <name type="common">American sweet flag</name>
    <name type="synonym">Acorus americanus</name>
    <dbReference type="NCBI Taxonomy" id="263995"/>
    <lineage>
        <taxon>Eukaryota</taxon>
        <taxon>Viridiplantae</taxon>
        <taxon>Streptophyta</taxon>
        <taxon>Embryophyta</taxon>
        <taxon>Tracheophyta</taxon>
        <taxon>Spermatophyta</taxon>
        <taxon>Magnoliopsida</taxon>
        <taxon>Liliopsida</taxon>
        <taxon>Acoraceae</taxon>
        <taxon>Acorus</taxon>
    </lineage>
</organism>
<keyword id="KW-0150">Chloroplast</keyword>
<keyword id="KW-0396">Initiation factor</keyword>
<keyword id="KW-0934">Plastid</keyword>
<keyword id="KW-0648">Protein biosynthesis</keyword>
<keyword id="KW-0694">RNA-binding</keyword>
<keyword id="KW-0699">rRNA-binding</keyword>
<comment type="function">
    <text evidence="1">One of the essential components for the initiation of protein synthesis. Stabilizes the binding of IF-2 and IF-3 on the 30S subunit to which N-formylmethionyl-tRNA(fMet) subsequently binds. Helps modulate mRNA selection, yielding the 30S pre-initiation complex (PIC). Upon addition of the 50S ribosomal subunit IF-1, IF-2 and IF-3 are released leaving the mature 70S translation initiation complex.</text>
</comment>
<comment type="subunit">
    <text evidence="1">Component of the 30S ribosomal translation pre-initiation complex which assembles on the 30S ribosome in the order IF-2 and IF-3, IF-1 and N-formylmethionyl-tRNA(fMet); mRNA recruitment can occur at any time during PIC assembly.</text>
</comment>
<comment type="subcellular location">
    <subcellularLocation>
        <location evidence="1">Plastid</location>
        <location evidence="1">Chloroplast</location>
    </subcellularLocation>
</comment>
<comment type="similarity">
    <text evidence="1">Belongs to the IF-1 family.</text>
</comment>
<protein>
    <recommendedName>
        <fullName evidence="1">Translation initiation factor IF-1, chloroplastic</fullName>
    </recommendedName>
</protein>
<feature type="chain" id="PRO_0000338954" description="Translation initiation factor IF-1, chloroplastic">
    <location>
        <begin position="1"/>
        <end position="77"/>
    </location>
</feature>
<feature type="domain" description="S1-like" evidence="1">
    <location>
        <begin position="1"/>
        <end position="71"/>
    </location>
</feature>
<accession>A9LYD5</accession>
<accession>A9QAQ8</accession>
<sequence length="77" mass="9074">MKEQKLIHEGLITESLPNGMFWVRLDNEDLVLGYISGRIRRSSIRILPGDRVKIEVSRYDSTRGRIIYRLRNKDSNE</sequence>
<evidence type="ECO:0000255" key="1">
    <source>
        <dbReference type="HAMAP-Rule" id="MF_00075"/>
    </source>
</evidence>
<name>IF1C_ACOCI</name>
<proteinExistence type="inferred from homology"/>